<gene>
    <name evidence="1" type="primary">hisI</name>
    <name type="ordered locus">BA_1431.1</name>
    <name type="ordered locus">GBAA_1431.1</name>
    <name type="ordered locus">BAS1322</name>
</gene>
<sequence>MKPNFSKGLLPAVVIEEGTKEVLMLAYMNEEAYEKTLKTKRTWFYSRSRRSLWNKGETSGHVQHVQSLYLDCDQDAIVVFVKQVGPACHTGEKTCFHYKII</sequence>
<comment type="function">
    <text evidence="1">Catalyzes the hydrolysis of the adenine ring of phosphoribosyl-AMP.</text>
</comment>
<comment type="catalytic activity">
    <reaction evidence="1">
        <text>1-(5-phospho-beta-D-ribosyl)-5'-AMP + H2O = 1-(5-phospho-beta-D-ribosyl)-5-[(5-phospho-beta-D-ribosylamino)methylideneamino]imidazole-4-carboxamide</text>
        <dbReference type="Rhea" id="RHEA:20049"/>
        <dbReference type="ChEBI" id="CHEBI:15377"/>
        <dbReference type="ChEBI" id="CHEBI:58435"/>
        <dbReference type="ChEBI" id="CHEBI:59457"/>
        <dbReference type="EC" id="3.5.4.19"/>
    </reaction>
</comment>
<comment type="cofactor">
    <cofactor evidence="1">
        <name>Mg(2+)</name>
        <dbReference type="ChEBI" id="CHEBI:18420"/>
    </cofactor>
    <text evidence="1">Binds 1 Mg(2+) ion per subunit.</text>
</comment>
<comment type="cofactor">
    <cofactor evidence="1">
        <name>Zn(2+)</name>
        <dbReference type="ChEBI" id="CHEBI:29105"/>
    </cofactor>
    <text evidence="1">Binds 1 zinc ion per subunit.</text>
</comment>
<comment type="pathway">
    <text evidence="1">Amino-acid biosynthesis; L-histidine biosynthesis; L-histidine from 5-phospho-alpha-D-ribose 1-diphosphate: step 3/9.</text>
</comment>
<comment type="subunit">
    <text evidence="1">Homodimer.</text>
</comment>
<comment type="subcellular location">
    <subcellularLocation>
        <location evidence="1">Cytoplasm</location>
    </subcellularLocation>
</comment>
<comment type="similarity">
    <text evidence="1">Belongs to the PRA-CH family.</text>
</comment>
<evidence type="ECO:0000255" key="1">
    <source>
        <dbReference type="HAMAP-Rule" id="MF_01021"/>
    </source>
</evidence>
<accession>P60540</accession>
<accession>Q6I1E0</accession>
<organism>
    <name type="scientific">Bacillus anthracis</name>
    <dbReference type="NCBI Taxonomy" id="1392"/>
    <lineage>
        <taxon>Bacteria</taxon>
        <taxon>Bacillati</taxon>
        <taxon>Bacillota</taxon>
        <taxon>Bacilli</taxon>
        <taxon>Bacillales</taxon>
        <taxon>Bacillaceae</taxon>
        <taxon>Bacillus</taxon>
        <taxon>Bacillus cereus group</taxon>
    </lineage>
</organism>
<reference key="1">
    <citation type="journal article" date="2003" name="Nature">
        <title>The genome sequence of Bacillus anthracis Ames and comparison to closely related bacteria.</title>
        <authorList>
            <person name="Read T.D."/>
            <person name="Peterson S.N."/>
            <person name="Tourasse N.J."/>
            <person name="Baillie L.W."/>
            <person name="Paulsen I.T."/>
            <person name="Nelson K.E."/>
            <person name="Tettelin H."/>
            <person name="Fouts D.E."/>
            <person name="Eisen J.A."/>
            <person name="Gill S.R."/>
            <person name="Holtzapple E.K."/>
            <person name="Okstad O.A."/>
            <person name="Helgason E."/>
            <person name="Rilstone J."/>
            <person name="Wu M."/>
            <person name="Kolonay J.F."/>
            <person name="Beanan M.J."/>
            <person name="Dodson R.J."/>
            <person name="Brinkac L.M."/>
            <person name="Gwinn M.L."/>
            <person name="DeBoy R.T."/>
            <person name="Madpu R."/>
            <person name="Daugherty S.C."/>
            <person name="Durkin A.S."/>
            <person name="Haft D.H."/>
            <person name="Nelson W.C."/>
            <person name="Peterson J.D."/>
            <person name="Pop M."/>
            <person name="Khouri H.M."/>
            <person name="Radune D."/>
            <person name="Benton J.L."/>
            <person name="Mahamoud Y."/>
            <person name="Jiang L."/>
            <person name="Hance I.R."/>
            <person name="Weidman J.F."/>
            <person name="Berry K.J."/>
            <person name="Plaut R.D."/>
            <person name="Wolf A.M."/>
            <person name="Watkins K.L."/>
            <person name="Nierman W.C."/>
            <person name="Hazen A."/>
            <person name="Cline R.T."/>
            <person name="Redmond C."/>
            <person name="Thwaite J.E."/>
            <person name="White O."/>
            <person name="Salzberg S.L."/>
            <person name="Thomason B."/>
            <person name="Friedlander A.M."/>
            <person name="Koehler T.M."/>
            <person name="Hanna P.C."/>
            <person name="Kolstoe A.-B."/>
            <person name="Fraser C.M."/>
        </authorList>
    </citation>
    <scope>NUCLEOTIDE SEQUENCE [LARGE SCALE GENOMIC DNA]</scope>
    <source>
        <strain>Ames / isolate Porton</strain>
    </source>
</reference>
<reference key="2">
    <citation type="journal article" date="2009" name="J. Bacteriol.">
        <title>The complete genome sequence of Bacillus anthracis Ames 'Ancestor'.</title>
        <authorList>
            <person name="Ravel J."/>
            <person name="Jiang L."/>
            <person name="Stanley S.T."/>
            <person name="Wilson M.R."/>
            <person name="Decker R.S."/>
            <person name="Read T.D."/>
            <person name="Worsham P."/>
            <person name="Keim P.S."/>
            <person name="Salzberg S.L."/>
            <person name="Fraser-Liggett C.M."/>
            <person name="Rasko D.A."/>
        </authorList>
    </citation>
    <scope>NUCLEOTIDE SEQUENCE [LARGE SCALE GENOMIC DNA]</scope>
    <source>
        <strain>Ames ancestor</strain>
    </source>
</reference>
<reference key="3">
    <citation type="submission" date="2004-01" db="EMBL/GenBank/DDBJ databases">
        <title>Complete genome sequence of Bacillus anthracis Sterne.</title>
        <authorList>
            <person name="Brettin T.S."/>
            <person name="Bruce D."/>
            <person name="Challacombe J.F."/>
            <person name="Gilna P."/>
            <person name="Han C."/>
            <person name="Hill K."/>
            <person name="Hitchcock P."/>
            <person name="Jackson P."/>
            <person name="Keim P."/>
            <person name="Longmire J."/>
            <person name="Lucas S."/>
            <person name="Okinaka R."/>
            <person name="Richardson P."/>
            <person name="Rubin E."/>
            <person name="Tice H."/>
        </authorList>
    </citation>
    <scope>NUCLEOTIDE SEQUENCE [LARGE SCALE GENOMIC DNA]</scope>
    <source>
        <strain>Sterne</strain>
    </source>
</reference>
<name>HIS3_BACAN</name>
<protein>
    <recommendedName>
        <fullName evidence="1">Phosphoribosyl-AMP cyclohydrolase</fullName>
        <shortName evidence="1">PRA-CH</shortName>
        <ecNumber evidence="1">3.5.4.19</ecNumber>
    </recommendedName>
</protein>
<dbReference type="EC" id="3.5.4.19" evidence="1"/>
<dbReference type="EMBL" id="AE016879">
    <property type="status" value="NOT_ANNOTATED_CDS"/>
    <property type="molecule type" value="Genomic_DNA"/>
</dbReference>
<dbReference type="EMBL" id="AE017334">
    <property type="status" value="NOT_ANNOTATED_CDS"/>
    <property type="molecule type" value="Genomic_DNA"/>
</dbReference>
<dbReference type="EMBL" id="AE017225">
    <property type="protein sequence ID" value="AAT53642.1"/>
    <property type="molecule type" value="Genomic_DNA"/>
</dbReference>
<dbReference type="RefSeq" id="WP_000803978.1">
    <property type="nucleotide sequence ID" value="NZ_WXXJ01000017.1"/>
</dbReference>
<dbReference type="RefSeq" id="YP_027591.1">
    <property type="nucleotide sequence ID" value="NC_005945.1"/>
</dbReference>
<dbReference type="SMR" id="P60540"/>
<dbReference type="STRING" id="261594.GBAA_1431"/>
<dbReference type="GeneID" id="45021410"/>
<dbReference type="KEGG" id="bat:BAS1322"/>
<dbReference type="PATRIC" id="fig|260799.14.peg.1405"/>
<dbReference type="eggNOG" id="COG0139">
    <property type="taxonomic scope" value="Bacteria"/>
</dbReference>
<dbReference type="OMA" id="TGYRSCF"/>
<dbReference type="OrthoDB" id="9795769at2"/>
<dbReference type="UniPathway" id="UPA00031">
    <property type="reaction ID" value="UER00008"/>
</dbReference>
<dbReference type="Proteomes" id="UP000000427">
    <property type="component" value="Chromosome"/>
</dbReference>
<dbReference type="Proteomes" id="UP000000594">
    <property type="component" value="Chromosome"/>
</dbReference>
<dbReference type="GO" id="GO:0005737">
    <property type="term" value="C:cytoplasm"/>
    <property type="evidence" value="ECO:0007669"/>
    <property type="project" value="UniProtKB-SubCell"/>
</dbReference>
<dbReference type="GO" id="GO:0000287">
    <property type="term" value="F:magnesium ion binding"/>
    <property type="evidence" value="ECO:0007669"/>
    <property type="project" value="UniProtKB-UniRule"/>
</dbReference>
<dbReference type="GO" id="GO:0004635">
    <property type="term" value="F:phosphoribosyl-AMP cyclohydrolase activity"/>
    <property type="evidence" value="ECO:0007669"/>
    <property type="project" value="UniProtKB-UniRule"/>
</dbReference>
<dbReference type="GO" id="GO:0008270">
    <property type="term" value="F:zinc ion binding"/>
    <property type="evidence" value="ECO:0007669"/>
    <property type="project" value="UniProtKB-UniRule"/>
</dbReference>
<dbReference type="GO" id="GO:0000105">
    <property type="term" value="P:L-histidine biosynthetic process"/>
    <property type="evidence" value="ECO:0007669"/>
    <property type="project" value="UniProtKB-UniRule"/>
</dbReference>
<dbReference type="FunFam" id="3.10.20.810:FF:000001">
    <property type="entry name" value="Histidine biosynthesis bifunctional protein HisIE"/>
    <property type="match status" value="1"/>
</dbReference>
<dbReference type="Gene3D" id="3.10.20.810">
    <property type="entry name" value="Phosphoribosyl-AMP cyclohydrolase"/>
    <property type="match status" value="1"/>
</dbReference>
<dbReference type="HAMAP" id="MF_01021">
    <property type="entry name" value="HisI"/>
    <property type="match status" value="1"/>
</dbReference>
<dbReference type="InterPro" id="IPR026660">
    <property type="entry name" value="PRA-CH"/>
</dbReference>
<dbReference type="InterPro" id="IPR002496">
    <property type="entry name" value="PRib_AMP_CycHydrolase_dom"/>
</dbReference>
<dbReference type="InterPro" id="IPR038019">
    <property type="entry name" value="PRib_AMP_CycHydrolase_sf"/>
</dbReference>
<dbReference type="NCBIfam" id="NF000768">
    <property type="entry name" value="PRK00051.1"/>
    <property type="match status" value="1"/>
</dbReference>
<dbReference type="PANTHER" id="PTHR42945">
    <property type="entry name" value="HISTIDINE BIOSYNTHESIS BIFUNCTIONAL PROTEIN"/>
    <property type="match status" value="1"/>
</dbReference>
<dbReference type="PANTHER" id="PTHR42945:SF1">
    <property type="entry name" value="HISTIDINE BIOSYNTHESIS BIFUNCTIONAL PROTEIN HIS7"/>
    <property type="match status" value="1"/>
</dbReference>
<dbReference type="Pfam" id="PF01502">
    <property type="entry name" value="PRA-CH"/>
    <property type="match status" value="1"/>
</dbReference>
<dbReference type="SUPFAM" id="SSF141734">
    <property type="entry name" value="HisI-like"/>
    <property type="match status" value="1"/>
</dbReference>
<proteinExistence type="inferred from homology"/>
<feature type="chain" id="PRO_0000136458" description="Phosphoribosyl-AMP cyclohydrolase">
    <location>
        <begin position="1"/>
        <end position="101"/>
    </location>
</feature>
<feature type="binding site" evidence="1">
    <location>
        <position position="71"/>
    </location>
    <ligand>
        <name>Mg(2+)</name>
        <dbReference type="ChEBI" id="CHEBI:18420"/>
    </ligand>
</feature>
<feature type="binding site" evidence="1">
    <location>
        <position position="72"/>
    </location>
    <ligand>
        <name>Zn(2+)</name>
        <dbReference type="ChEBI" id="CHEBI:29105"/>
        <note>ligand shared between dimeric partners</note>
    </ligand>
</feature>
<feature type="binding site" evidence="1">
    <location>
        <position position="73"/>
    </location>
    <ligand>
        <name>Mg(2+)</name>
        <dbReference type="ChEBI" id="CHEBI:18420"/>
    </ligand>
</feature>
<feature type="binding site" evidence="1">
    <location>
        <position position="75"/>
    </location>
    <ligand>
        <name>Mg(2+)</name>
        <dbReference type="ChEBI" id="CHEBI:18420"/>
    </ligand>
</feature>
<feature type="binding site" evidence="1">
    <location>
        <position position="88"/>
    </location>
    <ligand>
        <name>Zn(2+)</name>
        <dbReference type="ChEBI" id="CHEBI:29105"/>
        <note>ligand shared between dimeric partners</note>
    </ligand>
</feature>
<feature type="binding site" evidence="1">
    <location>
        <position position="95"/>
    </location>
    <ligand>
        <name>Zn(2+)</name>
        <dbReference type="ChEBI" id="CHEBI:29105"/>
        <note>ligand shared between dimeric partners</note>
    </ligand>
</feature>
<keyword id="KW-0028">Amino-acid biosynthesis</keyword>
<keyword id="KW-0963">Cytoplasm</keyword>
<keyword id="KW-0368">Histidine biosynthesis</keyword>
<keyword id="KW-0378">Hydrolase</keyword>
<keyword id="KW-0460">Magnesium</keyword>
<keyword id="KW-0479">Metal-binding</keyword>
<keyword id="KW-1185">Reference proteome</keyword>
<keyword id="KW-0862">Zinc</keyword>